<gene>
    <name evidence="1" type="primary">plsX</name>
    <name type="ordered locus">LEPBI_I2591</name>
</gene>
<proteinExistence type="inferred from homology"/>
<accession>B0SM41</accession>
<protein>
    <recommendedName>
        <fullName evidence="1">Phosphate acyltransferase</fullName>
        <ecNumber evidence="1">2.3.1.274</ecNumber>
    </recommendedName>
    <alternativeName>
        <fullName evidence="1">Acyl-ACP phosphotransacylase</fullName>
    </alternativeName>
    <alternativeName>
        <fullName evidence="1">Acyl-[acyl-carrier-protein]--phosphate acyltransferase</fullName>
    </alternativeName>
    <alternativeName>
        <fullName evidence="1">Phosphate-acyl-ACP acyltransferase</fullName>
    </alternativeName>
</protein>
<keyword id="KW-0963">Cytoplasm</keyword>
<keyword id="KW-0444">Lipid biosynthesis</keyword>
<keyword id="KW-0443">Lipid metabolism</keyword>
<keyword id="KW-0594">Phospholipid biosynthesis</keyword>
<keyword id="KW-1208">Phospholipid metabolism</keyword>
<keyword id="KW-1185">Reference proteome</keyword>
<keyword id="KW-0808">Transferase</keyword>
<name>PLSX_LEPBP</name>
<sequence length="340" mass="36476">MWVAVDAMSGDYGPEGIVEGAVLAVREFGLSVSLVGDEQELLDILLKFDYDTEKIRVIHSTEIIGMNDSPSIAVRAMEDSSVVKAVRLVADKECIGVFSPGNTGATMAAALLHLGRLPGVLRPPIAAPIPREEGPPVILLDAGANVDCKPEYLAQFAIMGEIYSRELFGVKNPKVGILSNGEEDKKGNTVSVKTFDLLKKIPFNFVGNVEGRDLYGSGRDVDVVVCDGFIGNIVLKATEGLAKSIFNVLRNSIRQSSLAQTGALLLKSTFTAVKKRLDYAEYGGALLLGVEGICMIGHGSSNALAVKNAVRVISECAKHQINERIRERLGEYKTILGDSN</sequence>
<comment type="function">
    <text evidence="1">Catalyzes the reversible formation of acyl-phosphate (acyl-PO(4)) from acyl-[acyl-carrier-protein] (acyl-ACP). This enzyme utilizes acyl-ACP as fatty acyl donor, but not acyl-CoA.</text>
</comment>
<comment type="catalytic activity">
    <reaction evidence="1">
        <text>a fatty acyl-[ACP] + phosphate = an acyl phosphate + holo-[ACP]</text>
        <dbReference type="Rhea" id="RHEA:42292"/>
        <dbReference type="Rhea" id="RHEA-COMP:9685"/>
        <dbReference type="Rhea" id="RHEA-COMP:14125"/>
        <dbReference type="ChEBI" id="CHEBI:43474"/>
        <dbReference type="ChEBI" id="CHEBI:59918"/>
        <dbReference type="ChEBI" id="CHEBI:64479"/>
        <dbReference type="ChEBI" id="CHEBI:138651"/>
        <dbReference type="EC" id="2.3.1.274"/>
    </reaction>
</comment>
<comment type="pathway">
    <text evidence="1">Lipid metabolism; phospholipid metabolism.</text>
</comment>
<comment type="subunit">
    <text evidence="1">Homodimer. Probably interacts with PlsY.</text>
</comment>
<comment type="subcellular location">
    <subcellularLocation>
        <location evidence="1">Cytoplasm</location>
    </subcellularLocation>
    <text evidence="1">Associated with the membrane possibly through PlsY.</text>
</comment>
<comment type="similarity">
    <text evidence="1">Belongs to the PlsX family.</text>
</comment>
<evidence type="ECO:0000255" key="1">
    <source>
        <dbReference type="HAMAP-Rule" id="MF_00019"/>
    </source>
</evidence>
<feature type="chain" id="PRO_1000089920" description="Phosphate acyltransferase">
    <location>
        <begin position="1"/>
        <end position="340"/>
    </location>
</feature>
<dbReference type="EC" id="2.3.1.274" evidence="1"/>
<dbReference type="EMBL" id="CP000786">
    <property type="protein sequence ID" value="ABZ98671.1"/>
    <property type="molecule type" value="Genomic_DNA"/>
</dbReference>
<dbReference type="RefSeq" id="WP_012389531.1">
    <property type="nucleotide sequence ID" value="NC_010602.1"/>
</dbReference>
<dbReference type="SMR" id="B0SM41"/>
<dbReference type="STRING" id="456481.LEPBI_I2591"/>
<dbReference type="KEGG" id="lbi:LEPBI_I2591"/>
<dbReference type="HOGENOM" id="CLU_039379_1_1_12"/>
<dbReference type="OrthoDB" id="9806408at2"/>
<dbReference type="BioCyc" id="LBIF456481:LEPBI_RS12750-MONOMER"/>
<dbReference type="UniPathway" id="UPA00085"/>
<dbReference type="Proteomes" id="UP000001847">
    <property type="component" value="Chromosome I"/>
</dbReference>
<dbReference type="GO" id="GO:0005737">
    <property type="term" value="C:cytoplasm"/>
    <property type="evidence" value="ECO:0007669"/>
    <property type="project" value="UniProtKB-SubCell"/>
</dbReference>
<dbReference type="GO" id="GO:0043811">
    <property type="term" value="F:phosphate:acyl-[acyl carrier protein] acyltransferase activity"/>
    <property type="evidence" value="ECO:0007669"/>
    <property type="project" value="UniProtKB-UniRule"/>
</dbReference>
<dbReference type="GO" id="GO:0006633">
    <property type="term" value="P:fatty acid biosynthetic process"/>
    <property type="evidence" value="ECO:0007669"/>
    <property type="project" value="UniProtKB-UniRule"/>
</dbReference>
<dbReference type="GO" id="GO:0008654">
    <property type="term" value="P:phospholipid biosynthetic process"/>
    <property type="evidence" value="ECO:0007669"/>
    <property type="project" value="UniProtKB-KW"/>
</dbReference>
<dbReference type="Gene3D" id="3.40.718.10">
    <property type="entry name" value="Isopropylmalate Dehydrogenase"/>
    <property type="match status" value="1"/>
</dbReference>
<dbReference type="HAMAP" id="MF_00019">
    <property type="entry name" value="PlsX"/>
    <property type="match status" value="1"/>
</dbReference>
<dbReference type="InterPro" id="IPR003664">
    <property type="entry name" value="FA_synthesis"/>
</dbReference>
<dbReference type="InterPro" id="IPR012281">
    <property type="entry name" value="Phospholipid_synth_PlsX-like"/>
</dbReference>
<dbReference type="NCBIfam" id="TIGR00182">
    <property type="entry name" value="plsX"/>
    <property type="match status" value="1"/>
</dbReference>
<dbReference type="PANTHER" id="PTHR30100">
    <property type="entry name" value="FATTY ACID/PHOSPHOLIPID SYNTHESIS PROTEIN PLSX"/>
    <property type="match status" value="1"/>
</dbReference>
<dbReference type="PANTHER" id="PTHR30100:SF1">
    <property type="entry name" value="PHOSPHATE ACYLTRANSFERASE"/>
    <property type="match status" value="1"/>
</dbReference>
<dbReference type="Pfam" id="PF02504">
    <property type="entry name" value="FA_synthesis"/>
    <property type="match status" value="1"/>
</dbReference>
<dbReference type="PIRSF" id="PIRSF002465">
    <property type="entry name" value="Phsphlp_syn_PlsX"/>
    <property type="match status" value="1"/>
</dbReference>
<dbReference type="SUPFAM" id="SSF53659">
    <property type="entry name" value="Isocitrate/Isopropylmalate dehydrogenase-like"/>
    <property type="match status" value="1"/>
</dbReference>
<organism>
    <name type="scientific">Leptospira biflexa serovar Patoc (strain Patoc 1 / ATCC 23582 / Paris)</name>
    <dbReference type="NCBI Taxonomy" id="456481"/>
    <lineage>
        <taxon>Bacteria</taxon>
        <taxon>Pseudomonadati</taxon>
        <taxon>Spirochaetota</taxon>
        <taxon>Spirochaetia</taxon>
        <taxon>Leptospirales</taxon>
        <taxon>Leptospiraceae</taxon>
        <taxon>Leptospira</taxon>
    </lineage>
</organism>
<reference key="1">
    <citation type="journal article" date="2008" name="PLoS ONE">
        <title>Genome sequence of the saprophyte Leptospira biflexa provides insights into the evolution of Leptospira and the pathogenesis of leptospirosis.</title>
        <authorList>
            <person name="Picardeau M."/>
            <person name="Bulach D.M."/>
            <person name="Bouchier C."/>
            <person name="Zuerner R.L."/>
            <person name="Zidane N."/>
            <person name="Wilson P.J."/>
            <person name="Creno S."/>
            <person name="Kuczek E.S."/>
            <person name="Bommezzadri S."/>
            <person name="Davis J.C."/>
            <person name="McGrath A."/>
            <person name="Johnson M.J."/>
            <person name="Boursaux-Eude C."/>
            <person name="Seemann T."/>
            <person name="Rouy Z."/>
            <person name="Coppel R.L."/>
            <person name="Rood J.I."/>
            <person name="Lajus A."/>
            <person name="Davies J.K."/>
            <person name="Medigue C."/>
            <person name="Adler B."/>
        </authorList>
    </citation>
    <scope>NUCLEOTIDE SEQUENCE [LARGE SCALE GENOMIC DNA]</scope>
    <source>
        <strain>Patoc 1 / ATCC 23582 / Paris</strain>
    </source>
</reference>